<accession>Q5M2U6</accession>
<sequence length="316" mass="35730">MTNEFHHVTVLLHETVDMLDIKPDGIYVDATLGGAGHSSYLLSQLSEKGHLYCFDQDQKAIDNAQVRLKDYIDKGMVTFIKDNFRNLKSNLEALGVSEIDGILYDLGVSSPQLDERERGFSYKQDAKLDMRMNEEASLTAYDVVNTYPYNDLVRIFFKYGEDKFSKQIARKIEQARQVKPIETTTELAEIIKSAKPAKELKKKGHPAKQIFQAIRIEVNDELGAADESIQEALDLLAVNGRISVITFHSLEDRLTKQLFKEASTADVPKGLPFIPEDLQPKVALVNRKPILPSQEELEANNRSHSAKLRVAKKIRK</sequence>
<reference key="1">
    <citation type="journal article" date="2004" name="Nat. Biotechnol.">
        <title>Complete sequence and comparative genome analysis of the dairy bacterium Streptococcus thermophilus.</title>
        <authorList>
            <person name="Bolotin A."/>
            <person name="Quinquis B."/>
            <person name="Renault P."/>
            <person name="Sorokin A."/>
            <person name="Ehrlich S.D."/>
            <person name="Kulakauskas S."/>
            <person name="Lapidus A."/>
            <person name="Goltsman E."/>
            <person name="Mazur M."/>
            <person name="Pusch G.D."/>
            <person name="Fonstein M."/>
            <person name="Overbeek R."/>
            <person name="Kyprides N."/>
            <person name="Purnelle B."/>
            <person name="Prozzi D."/>
            <person name="Ngui K."/>
            <person name="Masuy D."/>
            <person name="Hancy F."/>
            <person name="Burteau S."/>
            <person name="Boutry M."/>
            <person name="Delcour J."/>
            <person name="Goffeau A."/>
            <person name="Hols P."/>
        </authorList>
    </citation>
    <scope>NUCLEOTIDE SEQUENCE [LARGE SCALE GENOMIC DNA]</scope>
    <source>
        <strain>ATCC BAA-250 / LMG 18311</strain>
    </source>
</reference>
<evidence type="ECO:0000255" key="1">
    <source>
        <dbReference type="HAMAP-Rule" id="MF_01007"/>
    </source>
</evidence>
<evidence type="ECO:0000305" key="2"/>
<name>RSMH_STRT2</name>
<dbReference type="EC" id="2.1.1.199" evidence="1"/>
<dbReference type="EMBL" id="CP000023">
    <property type="protein sequence ID" value="AAV61304.1"/>
    <property type="status" value="ALT_INIT"/>
    <property type="molecule type" value="Genomic_DNA"/>
</dbReference>
<dbReference type="RefSeq" id="WP_041828335.1">
    <property type="nucleotide sequence ID" value="NC_006448.1"/>
</dbReference>
<dbReference type="SMR" id="Q5M2U6"/>
<dbReference type="STRING" id="264199.stu1703"/>
<dbReference type="GeneID" id="66899442"/>
<dbReference type="KEGG" id="stl:stu1703"/>
<dbReference type="PATRIC" id="fig|264199.4.peg.1676"/>
<dbReference type="eggNOG" id="COG0275">
    <property type="taxonomic scope" value="Bacteria"/>
</dbReference>
<dbReference type="HOGENOM" id="CLU_038422_2_0_9"/>
<dbReference type="Proteomes" id="UP000001170">
    <property type="component" value="Chromosome"/>
</dbReference>
<dbReference type="GO" id="GO:0005737">
    <property type="term" value="C:cytoplasm"/>
    <property type="evidence" value="ECO:0007669"/>
    <property type="project" value="UniProtKB-SubCell"/>
</dbReference>
<dbReference type="GO" id="GO:0071424">
    <property type="term" value="F:rRNA (cytosine-N4-)-methyltransferase activity"/>
    <property type="evidence" value="ECO:0007669"/>
    <property type="project" value="UniProtKB-UniRule"/>
</dbReference>
<dbReference type="GO" id="GO:0070475">
    <property type="term" value="P:rRNA base methylation"/>
    <property type="evidence" value="ECO:0007669"/>
    <property type="project" value="UniProtKB-UniRule"/>
</dbReference>
<dbReference type="FunFam" id="1.10.150.170:FF:000001">
    <property type="entry name" value="Ribosomal RNA small subunit methyltransferase H"/>
    <property type="match status" value="1"/>
</dbReference>
<dbReference type="Gene3D" id="1.10.150.170">
    <property type="entry name" value="Putative methyltransferase TM0872, insert domain"/>
    <property type="match status" value="1"/>
</dbReference>
<dbReference type="Gene3D" id="3.40.50.150">
    <property type="entry name" value="Vaccinia Virus protein VP39"/>
    <property type="match status" value="1"/>
</dbReference>
<dbReference type="HAMAP" id="MF_01007">
    <property type="entry name" value="16SrRNA_methyltr_H"/>
    <property type="match status" value="1"/>
</dbReference>
<dbReference type="InterPro" id="IPR002903">
    <property type="entry name" value="RsmH"/>
</dbReference>
<dbReference type="InterPro" id="IPR023397">
    <property type="entry name" value="SAM-dep_MeTrfase_MraW_recog"/>
</dbReference>
<dbReference type="InterPro" id="IPR029063">
    <property type="entry name" value="SAM-dependent_MTases_sf"/>
</dbReference>
<dbReference type="NCBIfam" id="TIGR00006">
    <property type="entry name" value="16S rRNA (cytosine(1402)-N(4))-methyltransferase RsmH"/>
    <property type="match status" value="1"/>
</dbReference>
<dbReference type="PANTHER" id="PTHR11265:SF0">
    <property type="entry name" value="12S RRNA N4-METHYLCYTIDINE METHYLTRANSFERASE"/>
    <property type="match status" value="1"/>
</dbReference>
<dbReference type="PANTHER" id="PTHR11265">
    <property type="entry name" value="S-ADENOSYL-METHYLTRANSFERASE MRAW"/>
    <property type="match status" value="1"/>
</dbReference>
<dbReference type="Pfam" id="PF01795">
    <property type="entry name" value="Methyltransf_5"/>
    <property type="match status" value="1"/>
</dbReference>
<dbReference type="PIRSF" id="PIRSF004486">
    <property type="entry name" value="MraW"/>
    <property type="match status" value="1"/>
</dbReference>
<dbReference type="SUPFAM" id="SSF81799">
    <property type="entry name" value="Putative methyltransferase TM0872, insert domain"/>
    <property type="match status" value="1"/>
</dbReference>
<dbReference type="SUPFAM" id="SSF53335">
    <property type="entry name" value="S-adenosyl-L-methionine-dependent methyltransferases"/>
    <property type="match status" value="1"/>
</dbReference>
<proteinExistence type="inferred from homology"/>
<keyword id="KW-0963">Cytoplasm</keyword>
<keyword id="KW-0489">Methyltransferase</keyword>
<keyword id="KW-1185">Reference proteome</keyword>
<keyword id="KW-0698">rRNA processing</keyword>
<keyword id="KW-0949">S-adenosyl-L-methionine</keyword>
<keyword id="KW-0808">Transferase</keyword>
<comment type="function">
    <text evidence="1">Specifically methylates the N4 position of cytidine in position 1402 (C1402) of 16S rRNA.</text>
</comment>
<comment type="catalytic activity">
    <reaction evidence="1">
        <text>cytidine(1402) in 16S rRNA + S-adenosyl-L-methionine = N(4)-methylcytidine(1402) in 16S rRNA + S-adenosyl-L-homocysteine + H(+)</text>
        <dbReference type="Rhea" id="RHEA:42928"/>
        <dbReference type="Rhea" id="RHEA-COMP:10286"/>
        <dbReference type="Rhea" id="RHEA-COMP:10287"/>
        <dbReference type="ChEBI" id="CHEBI:15378"/>
        <dbReference type="ChEBI" id="CHEBI:57856"/>
        <dbReference type="ChEBI" id="CHEBI:59789"/>
        <dbReference type="ChEBI" id="CHEBI:74506"/>
        <dbReference type="ChEBI" id="CHEBI:82748"/>
        <dbReference type="EC" id="2.1.1.199"/>
    </reaction>
</comment>
<comment type="subcellular location">
    <subcellularLocation>
        <location evidence="1">Cytoplasm</location>
    </subcellularLocation>
</comment>
<comment type="similarity">
    <text evidence="1">Belongs to the methyltransferase superfamily. RsmH family.</text>
</comment>
<comment type="sequence caution" evidence="2">
    <conflict type="erroneous initiation">
        <sequence resource="EMBL-CDS" id="AAV61304"/>
    </conflict>
</comment>
<organism>
    <name type="scientific">Streptococcus thermophilus (strain ATCC BAA-250 / LMG 18311)</name>
    <dbReference type="NCBI Taxonomy" id="264199"/>
    <lineage>
        <taxon>Bacteria</taxon>
        <taxon>Bacillati</taxon>
        <taxon>Bacillota</taxon>
        <taxon>Bacilli</taxon>
        <taxon>Lactobacillales</taxon>
        <taxon>Streptococcaceae</taxon>
        <taxon>Streptococcus</taxon>
    </lineage>
</organism>
<feature type="chain" id="PRO_0000108726" description="Ribosomal RNA small subunit methyltransferase H">
    <location>
        <begin position="1"/>
        <end position="316"/>
    </location>
</feature>
<feature type="binding site" evidence="1">
    <location>
        <begin position="35"/>
        <end position="37"/>
    </location>
    <ligand>
        <name>S-adenosyl-L-methionine</name>
        <dbReference type="ChEBI" id="CHEBI:59789"/>
    </ligand>
</feature>
<feature type="binding site" evidence="1">
    <location>
        <position position="55"/>
    </location>
    <ligand>
        <name>S-adenosyl-L-methionine</name>
        <dbReference type="ChEBI" id="CHEBI:59789"/>
    </ligand>
</feature>
<feature type="binding site" evidence="1">
    <location>
        <position position="84"/>
    </location>
    <ligand>
        <name>S-adenosyl-L-methionine</name>
        <dbReference type="ChEBI" id="CHEBI:59789"/>
    </ligand>
</feature>
<feature type="binding site" evidence="1">
    <location>
        <position position="105"/>
    </location>
    <ligand>
        <name>S-adenosyl-L-methionine</name>
        <dbReference type="ChEBI" id="CHEBI:59789"/>
    </ligand>
</feature>
<feature type="binding site" evidence="1">
    <location>
        <position position="112"/>
    </location>
    <ligand>
        <name>S-adenosyl-L-methionine</name>
        <dbReference type="ChEBI" id="CHEBI:59789"/>
    </ligand>
</feature>
<gene>
    <name evidence="1" type="primary">rsmH</name>
    <name type="synonym">mraW</name>
    <name type="ordered locus">stu1703</name>
</gene>
<protein>
    <recommendedName>
        <fullName evidence="1">Ribosomal RNA small subunit methyltransferase H</fullName>
        <ecNumber evidence="1">2.1.1.199</ecNumber>
    </recommendedName>
    <alternativeName>
        <fullName evidence="1">16S rRNA m(4)C1402 methyltransferase</fullName>
    </alternativeName>
    <alternativeName>
        <fullName evidence="1">rRNA (cytosine-N(4)-)-methyltransferase RsmH</fullName>
    </alternativeName>
</protein>